<gene>
    <name type="primary">Hspb6</name>
</gene>
<evidence type="ECO:0000250" key="1">
    <source>
        <dbReference type="UniProtKB" id="O14558"/>
    </source>
</evidence>
<evidence type="ECO:0000255" key="2">
    <source>
        <dbReference type="PROSITE-ProRule" id="PRU00285"/>
    </source>
</evidence>
<evidence type="ECO:0000269" key="3">
    <source>
    </source>
</evidence>
<evidence type="ECO:0000269" key="4">
    <source>
    </source>
</evidence>
<evidence type="ECO:0000269" key="5">
    <source>
    </source>
</evidence>
<evidence type="ECO:0000269" key="6">
    <source>
    </source>
</evidence>
<evidence type="ECO:0000269" key="7">
    <source>
    </source>
</evidence>
<evidence type="ECO:0000303" key="8">
    <source>
    </source>
</evidence>
<evidence type="ECO:0007744" key="9">
    <source>
    </source>
</evidence>
<evidence type="ECO:0007829" key="10">
    <source>
        <dbReference type="PDB" id="2WJ5"/>
    </source>
</evidence>
<proteinExistence type="evidence at protein level"/>
<sequence>MEIRVPVQPSWLRRASAPLPGFSTPGRLFDQRFGEGLLEAELASLCPAAIAPYYLRAPSVALPTAQVPTDPGYFSVLLDVKHFSPEEISVKVVGDHVEVHARHEERPDEHGFIAREFHRRYRLPPGVDPAAVTSALSPEGVLSIQATPASAQASLPSPPAAK</sequence>
<protein>
    <recommendedName>
        <fullName>Heat shock protein beta-6</fullName>
        <shortName>HspB6</shortName>
    </recommendedName>
    <alternativeName>
        <fullName>Heat shock 20 kDa-like protein p20</fullName>
        <shortName evidence="8">Hsp20</shortName>
    </alternativeName>
</protein>
<dbReference type="EMBL" id="D29960">
    <property type="protein sequence ID" value="BAA06227.1"/>
    <property type="molecule type" value="mRNA"/>
</dbReference>
<dbReference type="PIR" id="A53814">
    <property type="entry name" value="A53814"/>
</dbReference>
<dbReference type="RefSeq" id="NP_620242.1">
    <property type="nucleotide sequence ID" value="NM_138887.1"/>
</dbReference>
<dbReference type="PDB" id="2WJ5">
    <property type="method" value="X-ray"/>
    <property type="resolution" value="1.12 A"/>
    <property type="chains" value="A=65-162"/>
</dbReference>
<dbReference type="PDBsum" id="2WJ5"/>
<dbReference type="SMR" id="P97541"/>
<dbReference type="BioGRID" id="251372">
    <property type="interactions" value="4"/>
</dbReference>
<dbReference type="FunCoup" id="P97541">
    <property type="interactions" value="60"/>
</dbReference>
<dbReference type="STRING" id="10116.ENSRNOP00000028401"/>
<dbReference type="GlyGen" id="P97541">
    <property type="glycosylation" value="2 sites, 1 O-linked glycan (1 site)"/>
</dbReference>
<dbReference type="iPTMnet" id="P97541"/>
<dbReference type="PhosphoSitePlus" id="P97541"/>
<dbReference type="PaxDb" id="10116-ENSRNOP00000028401"/>
<dbReference type="Ensembl" id="ENSRNOT00000028401.5">
    <property type="protein sequence ID" value="ENSRNOP00000028401.1"/>
    <property type="gene ID" value="ENSRNOG00000020922.7"/>
</dbReference>
<dbReference type="GeneID" id="192245"/>
<dbReference type="KEGG" id="rno:192245"/>
<dbReference type="UCSC" id="RGD:621554">
    <property type="organism name" value="rat"/>
</dbReference>
<dbReference type="AGR" id="RGD:621554"/>
<dbReference type="CTD" id="126393"/>
<dbReference type="RGD" id="621554">
    <property type="gene designation" value="Hspb6"/>
</dbReference>
<dbReference type="eggNOG" id="KOG3591">
    <property type="taxonomic scope" value="Eukaryota"/>
</dbReference>
<dbReference type="GeneTree" id="ENSGT00940000161100"/>
<dbReference type="HOGENOM" id="CLU_095001_2_0_1"/>
<dbReference type="InParanoid" id="P97541"/>
<dbReference type="OrthoDB" id="87523at9989"/>
<dbReference type="PhylomeDB" id="P97541"/>
<dbReference type="TreeFam" id="TF105049"/>
<dbReference type="EvolutionaryTrace" id="P97541"/>
<dbReference type="PRO" id="PR:P97541"/>
<dbReference type="Proteomes" id="UP000002494">
    <property type="component" value="Chromosome 1"/>
</dbReference>
<dbReference type="Bgee" id="ENSRNOG00000020922">
    <property type="expression patterns" value="Expressed in heart and 20 other cell types or tissues"/>
</dbReference>
<dbReference type="GO" id="GO:0005737">
    <property type="term" value="C:cytoplasm"/>
    <property type="evidence" value="ECO:0000250"/>
    <property type="project" value="UniProtKB"/>
</dbReference>
<dbReference type="GO" id="GO:0005829">
    <property type="term" value="C:cytosol"/>
    <property type="evidence" value="ECO:0007669"/>
    <property type="project" value="Ensembl"/>
</dbReference>
<dbReference type="GO" id="GO:0005576">
    <property type="term" value="C:extracellular region"/>
    <property type="evidence" value="ECO:0000266"/>
    <property type="project" value="RGD"/>
</dbReference>
<dbReference type="GO" id="GO:0005739">
    <property type="term" value="C:mitochondrion"/>
    <property type="evidence" value="ECO:0007669"/>
    <property type="project" value="Ensembl"/>
</dbReference>
<dbReference type="GO" id="GO:0016607">
    <property type="term" value="C:nuclear speck"/>
    <property type="evidence" value="ECO:0007669"/>
    <property type="project" value="Ensembl"/>
</dbReference>
<dbReference type="GO" id="GO:0005634">
    <property type="term" value="C:nucleus"/>
    <property type="evidence" value="ECO:0000250"/>
    <property type="project" value="UniProtKB"/>
</dbReference>
<dbReference type="GO" id="GO:0044183">
    <property type="term" value="F:protein folding chaperone"/>
    <property type="evidence" value="ECO:0000266"/>
    <property type="project" value="RGD"/>
</dbReference>
<dbReference type="GO" id="GO:0042803">
    <property type="term" value="F:protein homodimerization activity"/>
    <property type="evidence" value="ECO:0000353"/>
    <property type="project" value="UniProtKB"/>
</dbReference>
<dbReference type="GO" id="GO:0019901">
    <property type="term" value="F:protein kinase binding"/>
    <property type="evidence" value="ECO:0000353"/>
    <property type="project" value="RGD"/>
</dbReference>
<dbReference type="GO" id="GO:0051087">
    <property type="term" value="F:protein-folding chaperone binding"/>
    <property type="evidence" value="ECO:0000266"/>
    <property type="project" value="RGD"/>
</dbReference>
<dbReference type="GO" id="GO:0005212">
    <property type="term" value="F:structural constituent of eye lens"/>
    <property type="evidence" value="ECO:0007669"/>
    <property type="project" value="InterPro"/>
</dbReference>
<dbReference type="GO" id="GO:0051082">
    <property type="term" value="F:unfolded protein binding"/>
    <property type="evidence" value="ECO:0000266"/>
    <property type="project" value="RGD"/>
</dbReference>
<dbReference type="GO" id="GO:0061077">
    <property type="term" value="P:chaperone-mediated protein folding"/>
    <property type="evidence" value="ECO:0000266"/>
    <property type="project" value="RGD"/>
</dbReference>
<dbReference type="GO" id="GO:0043066">
    <property type="term" value="P:negative regulation of apoptotic process"/>
    <property type="evidence" value="ECO:0000318"/>
    <property type="project" value="GO_Central"/>
</dbReference>
<dbReference type="GO" id="GO:0010667">
    <property type="term" value="P:negative regulation of cardiac muscle cell apoptotic process"/>
    <property type="evidence" value="ECO:0000314"/>
    <property type="project" value="UniProtKB"/>
</dbReference>
<dbReference type="GO" id="GO:0045766">
    <property type="term" value="P:positive regulation of angiogenesis"/>
    <property type="evidence" value="ECO:0000266"/>
    <property type="project" value="RGD"/>
</dbReference>
<dbReference type="GO" id="GO:0042026">
    <property type="term" value="P:protein refolding"/>
    <property type="evidence" value="ECO:0000318"/>
    <property type="project" value="GO_Central"/>
</dbReference>
<dbReference type="GO" id="GO:0009408">
    <property type="term" value="P:response to heat"/>
    <property type="evidence" value="ECO:0000318"/>
    <property type="project" value="GO_Central"/>
</dbReference>
<dbReference type="CDD" id="cd06478">
    <property type="entry name" value="ACD_HspB4-5-6"/>
    <property type="match status" value="1"/>
</dbReference>
<dbReference type="FunFam" id="2.60.40.790:FF:000029">
    <property type="entry name" value="Putative heat shock protein beta-6"/>
    <property type="match status" value="1"/>
</dbReference>
<dbReference type="Gene3D" id="2.60.40.790">
    <property type="match status" value="1"/>
</dbReference>
<dbReference type="InterPro" id="IPR002068">
    <property type="entry name" value="A-crystallin/Hsp20_dom"/>
</dbReference>
<dbReference type="InterPro" id="IPR001436">
    <property type="entry name" value="Alpha-crystallin/sHSP_animal"/>
</dbReference>
<dbReference type="InterPro" id="IPR003090">
    <property type="entry name" value="Alpha-crystallin_N"/>
</dbReference>
<dbReference type="InterPro" id="IPR008978">
    <property type="entry name" value="HSP20-like_chaperone"/>
</dbReference>
<dbReference type="PANTHER" id="PTHR45640:SF36">
    <property type="entry name" value="HEAT SHOCK PROTEIN BETA-6"/>
    <property type="match status" value="1"/>
</dbReference>
<dbReference type="PANTHER" id="PTHR45640">
    <property type="entry name" value="HEAT SHOCK PROTEIN HSP-12.2-RELATED"/>
    <property type="match status" value="1"/>
</dbReference>
<dbReference type="Pfam" id="PF00525">
    <property type="entry name" value="Crystallin"/>
    <property type="match status" value="1"/>
</dbReference>
<dbReference type="Pfam" id="PF00011">
    <property type="entry name" value="HSP20"/>
    <property type="match status" value="1"/>
</dbReference>
<dbReference type="PRINTS" id="PR00299">
    <property type="entry name" value="ACRYSTALLIN"/>
</dbReference>
<dbReference type="SUPFAM" id="SSF49764">
    <property type="entry name" value="HSP20-like chaperones"/>
    <property type="match status" value="1"/>
</dbReference>
<dbReference type="PROSITE" id="PS01031">
    <property type="entry name" value="SHSP"/>
    <property type="match status" value="1"/>
</dbReference>
<keyword id="KW-0002">3D-structure</keyword>
<keyword id="KW-0143">Chaperone</keyword>
<keyword id="KW-0963">Cytoplasm</keyword>
<keyword id="KW-0903">Direct protein sequencing</keyword>
<keyword id="KW-1017">Isopeptide bond</keyword>
<keyword id="KW-0539">Nucleus</keyword>
<keyword id="KW-0597">Phosphoprotein</keyword>
<keyword id="KW-1185">Reference proteome</keyword>
<keyword id="KW-0964">Secreted</keyword>
<keyword id="KW-0346">Stress response</keyword>
<comment type="function">
    <text evidence="1 3">Small heat shock protein which functions as a molecular chaperone probably maintaining denatured proteins in a folding-competent state (By similarity). Seems to have versatile functions in various biological processes (By similarity). Plays a role in regulating muscle function such as smooth muscle vasorelaxation and cardiac myocyte contractility (By similarity). May regulate myocardial angiogenesis implicating KDR (By similarity). Overexpression mediates cardioprotection and angiogenesis after induced damage (PubMed:15105294). Stabilizes monomeric YWHAZ thereby supporting YWHAZ chaperone-like activity (By similarity).</text>
</comment>
<comment type="subunit">
    <text evidence="1 5">Homodimer (PubMed:19646995). Small heat shock proteins form high molecular mass oligomers containing variable number of monomers; these oligomers display a very flexible quaternary structure easily exchanging their subunits. Heterooligomer with HSPB1; formed through oligomerization of HSPB1:HSBP6 dimers; subunit exchange leads to formation of at least two different heterooligomeric complexes, differing in variable quantities of HSPB1 and HSPB6 homodimers in addition to HSPB1:HSPB6 heterodimers. Heterooligomer with CRYAB; large heterooligomers consist of CRYAB homodimers and HSPB5:HSPB6 heterodimers but lacking HSPB6 homodimers. Interacts with BAG3. Interacts (phosphorylated) with YWHAZ. Interacts with PDE4A and PDE4D; required for maintenance of the non-phosphorylated state of HSPB6 under basal conditions. Interacts with KDR. Interacts with PRKD1 (By similarity).</text>
</comment>
<comment type="subcellular location">
    <subcellularLocation>
        <location evidence="1">Cytoplasm</location>
    </subcellularLocation>
    <subcellularLocation>
        <location evidence="1">Nucleus</location>
    </subcellularLocation>
    <subcellularLocation>
        <location evidence="1">Secreted</location>
    </subcellularLocation>
    <text evidence="1">Translocates to nuclear foci during heat shock.</text>
</comment>
<comment type="tissue specificity">
    <text evidence="7">Widely expressed. High expression in muscle tissues.</text>
</comment>
<comment type="PTM">
    <text evidence="6">The N-terminus is blocked.</text>
</comment>
<comment type="PTM">
    <text evidence="1 3">Phosphorylated at Ser-16 by PKA and probably PKD1K; required to protect cardiomyocytes from apoptosis.</text>
</comment>
<comment type="similarity">
    <text evidence="2">Belongs to the small heat shock protein (HSP20) family.</text>
</comment>
<feature type="chain" id="PRO_0000125940" description="Heat shock protein beta-6">
    <location>
        <begin position="1"/>
        <end position="162"/>
    </location>
</feature>
<feature type="domain" description="sHSP" evidence="2">
    <location>
        <begin position="56"/>
        <end position="162"/>
    </location>
</feature>
<feature type="region of interest" description="Involved in stabilization of the HSPB1:HSBP6 heterodimer" evidence="1">
    <location>
        <begin position="1"/>
        <end position="72"/>
    </location>
</feature>
<feature type="modified residue" description="Phosphoserine" evidence="9">
    <location>
        <position position="16"/>
    </location>
</feature>
<feature type="modified residue" description="Deamidated glutamine" evidence="4">
    <location>
        <position position="66"/>
    </location>
</feature>
<feature type="modified residue" description="Phosphoserine" evidence="9">
    <location>
        <position position="157"/>
    </location>
</feature>
<feature type="cross-link" description="Isoglutamyl lysine isopeptide (Gln-Lys) (interchain with K-162)" evidence="4">
    <location>
        <position position="31"/>
    </location>
</feature>
<feature type="cross-link" description="Isoglutamyl lysine isopeptide (Lys-Gln) (interchain with Q-31)" evidence="4">
    <location>
        <position position="162"/>
    </location>
</feature>
<feature type="mutagenesis site" description="Abolished transglutamination." evidence="4">
    <original>Q</original>
    <variation>E</variation>
    <location>
        <position position="31"/>
    </location>
</feature>
<feature type="strand" evidence="10">
    <location>
        <begin position="74"/>
        <end position="79"/>
    </location>
</feature>
<feature type="helix" evidence="10">
    <location>
        <begin position="85"/>
        <end position="87"/>
    </location>
</feature>
<feature type="strand" evidence="10">
    <location>
        <begin position="88"/>
        <end position="93"/>
    </location>
</feature>
<feature type="strand" evidence="10">
    <location>
        <begin position="96"/>
        <end position="105"/>
    </location>
</feature>
<feature type="strand" evidence="10">
    <location>
        <begin position="113"/>
        <end position="122"/>
    </location>
</feature>
<feature type="strand" evidence="10">
    <location>
        <begin position="133"/>
        <end position="136"/>
    </location>
</feature>
<feature type="strand" evidence="10">
    <location>
        <begin position="140"/>
        <end position="146"/>
    </location>
</feature>
<organism>
    <name type="scientific">Rattus norvegicus</name>
    <name type="common">Rat</name>
    <dbReference type="NCBI Taxonomy" id="10116"/>
    <lineage>
        <taxon>Eukaryota</taxon>
        <taxon>Metazoa</taxon>
        <taxon>Chordata</taxon>
        <taxon>Craniata</taxon>
        <taxon>Vertebrata</taxon>
        <taxon>Euteleostomi</taxon>
        <taxon>Mammalia</taxon>
        <taxon>Eutheria</taxon>
        <taxon>Euarchontoglires</taxon>
        <taxon>Glires</taxon>
        <taxon>Rodentia</taxon>
        <taxon>Myomorpha</taxon>
        <taxon>Muroidea</taxon>
        <taxon>Muridae</taxon>
        <taxon>Murinae</taxon>
        <taxon>Rattus</taxon>
    </lineage>
</organism>
<name>HSPB6_RAT</name>
<reference key="1">
    <citation type="journal article" date="1996" name="Gene">
        <title>cDNA cloning of a 20-kDa protein (p20) highly homologous to small heat shock proteins: developmental and physiological changes in rat hindlimb muscles.</title>
        <authorList>
            <person name="Inaguma Y."/>
            <person name="Hasegawa K."/>
            <person name="Kato K."/>
            <person name="Nishida Y."/>
        </authorList>
    </citation>
    <scope>NUCLEOTIDE SEQUENCE [MRNA]</scope>
    <scope>TISSUE SPECIFICITY</scope>
    <source>
        <tissue>Soleus muscle</tissue>
    </source>
</reference>
<reference key="2">
    <citation type="journal article" date="1994" name="J. Biol. Chem.">
        <title>Purification and characterization of a 20-kDa protein that is highly homologous to alpha B crystallin.</title>
        <authorList>
            <person name="Kato K."/>
            <person name="Goto S."/>
            <person name="Inaguma Y."/>
            <person name="Hasegawa K."/>
            <person name="Morishita R."/>
            <person name="Asano T."/>
        </authorList>
    </citation>
    <scope>PROTEIN SEQUENCE OF 2-162</scope>
    <scope>CHARACTERIZATION</scope>
    <source>
        <tissue>Muscle</tissue>
    </source>
</reference>
<reference key="3">
    <citation type="journal article" date="2004" name="Circ. Res.">
        <title>Small heat-shock protein Hsp20 phosphorylation inhibits beta-agonist-induced cardiac apoptosis.</title>
        <authorList>
            <person name="Fan G.C."/>
            <person name="Chu G."/>
            <person name="Mitton B."/>
            <person name="Song Q."/>
            <person name="Yuan Q."/>
            <person name="Kranias E.G."/>
        </authorList>
    </citation>
    <scope>PHOSPHORYLATION AT SER-16</scope>
    <scope>FUNCTION</scope>
</reference>
<reference key="4">
    <citation type="journal article" date="2012" name="Nat. Commun.">
        <title>Quantitative maps of protein phosphorylation sites across 14 different rat organs and tissues.</title>
        <authorList>
            <person name="Lundby A."/>
            <person name="Secher A."/>
            <person name="Lage K."/>
            <person name="Nordsborg N.B."/>
            <person name="Dmytriyev A."/>
            <person name="Lundby C."/>
            <person name="Olsen J.V."/>
        </authorList>
    </citation>
    <scope>PHOSPHORYLATION [LARGE SCALE ANALYSIS] AT SER-16 AND SER-157</scope>
    <scope>IDENTIFICATION BY MASS SPECTROMETRY [LARGE SCALE ANALYSIS]</scope>
</reference>
<reference key="5">
    <citation type="journal article" date="2009" name="J. Mol. Biol.">
        <title>Crystal structures of alpha-crystallin domain dimers of alphaB-crystallin and Hsp20.</title>
        <authorList>
            <person name="Bagneris C."/>
            <person name="Bateman O.A."/>
            <person name="Naylor C.E."/>
            <person name="Cronin N."/>
            <person name="Boelens W.C."/>
            <person name="Keep N.H."/>
            <person name="Slingsby C."/>
        </authorList>
    </citation>
    <scope>X-RAY CRYSTALLOGRAPHY (1.12 ANGSTROMS) OF 65-162</scope>
    <scope>HOMODIMER</scope>
</reference>
<reference key="6">
    <citation type="journal article" date="2006" name="Proteins">
        <title>Site-specific transamidation and deamidation of the small heat-shock protein Hsp20 by tissue transglutaminase.</title>
        <authorList>
            <person name="Boros S."/>
            <person name="Ahrman E."/>
            <person name="Wunderink L."/>
            <person name="Kamps B."/>
            <person name="de Jong W.W."/>
            <person name="Boelens W.C."/>
            <person name="Emanuelsson C.S."/>
        </authorList>
    </citation>
    <scope>TRANSGLUTAMINATION AT GLN-31 AND LYS-162</scope>
    <scope>DEAMIDATION AT GLN-66</scope>
    <scope>MUTAGENESIS OF GLN-31</scope>
</reference>
<accession>P97541</accession>